<sequence>MTTIDTISDVITRIRNANILKLDRVELINTKVAIGICHILKDRGFINSFGEFLNSSDRMSNRRFIQKYIIVNLKYKGERRSPCIKELRRISKPGRRVYVGYKNLHKTKGGIELFVLSTSKGLITDYTAREKGIGGELLFSIC</sequence>
<keyword id="KW-0934">Plastid</keyword>
<keyword id="KW-0687">Ribonucleoprotein</keyword>
<keyword id="KW-0689">Ribosomal protein</keyword>
<keyword id="KW-0694">RNA-binding</keyword>
<keyword id="KW-0699">rRNA-binding</keyword>
<evidence type="ECO:0000250" key="1"/>
<evidence type="ECO:0000305" key="2"/>
<geneLocation type="non-photosynthetic plastid"/>
<comment type="function">
    <text evidence="1">One of the primary rRNA binding proteins, it binds directly to 16S rRNA central domain where it helps coordinate assembly of the platform of the 30S subunit.</text>
</comment>
<comment type="subunit">
    <text>Part of the 30S ribosomal subunit.</text>
</comment>
<comment type="subcellular location">
    <subcellularLocation>
        <location>Plastid</location>
    </subcellularLocation>
</comment>
<comment type="similarity">
    <text evidence="2">Belongs to the universal ribosomal protein uS8 family.</text>
</comment>
<protein>
    <recommendedName>
        <fullName evidence="2">Small ribosomal subunit protein uS8c</fullName>
    </recommendedName>
    <alternativeName>
        <fullName>30S ribosomal protein S8, plastid</fullName>
    </alternativeName>
</protein>
<name>RR8_EUGLO</name>
<gene>
    <name type="primary">rps8</name>
</gene>
<accession>P24353</accession>
<proteinExistence type="inferred from homology"/>
<organism>
    <name type="scientific">Euglena longa</name>
    <name type="common">Euglenophycean alga</name>
    <name type="synonym">Astasia longa</name>
    <dbReference type="NCBI Taxonomy" id="3037"/>
    <lineage>
        <taxon>Eukaryota</taxon>
        <taxon>Discoba</taxon>
        <taxon>Euglenozoa</taxon>
        <taxon>Euglenida</taxon>
        <taxon>Spirocuta</taxon>
        <taxon>Euglenophyceae</taxon>
        <taxon>Euglenales</taxon>
        <taxon>Euglenaceae</taxon>
        <taxon>Euglena</taxon>
    </lineage>
</organism>
<dbReference type="EMBL" id="AJ294725">
    <property type="protein sequence ID" value="CAC24577.1"/>
    <property type="molecule type" value="Genomic_DNA"/>
</dbReference>
<dbReference type="PIR" id="S14151">
    <property type="entry name" value="R3IT8"/>
</dbReference>
<dbReference type="RefSeq" id="NP_074966.1">
    <property type="nucleotide sequence ID" value="NC_002652.1"/>
</dbReference>
<dbReference type="SMR" id="P24353"/>
<dbReference type="GeneID" id="802523"/>
<dbReference type="GO" id="GO:0009536">
    <property type="term" value="C:plastid"/>
    <property type="evidence" value="ECO:0007669"/>
    <property type="project" value="UniProtKB-SubCell"/>
</dbReference>
<dbReference type="GO" id="GO:1990904">
    <property type="term" value="C:ribonucleoprotein complex"/>
    <property type="evidence" value="ECO:0007669"/>
    <property type="project" value="UniProtKB-KW"/>
</dbReference>
<dbReference type="GO" id="GO:0005840">
    <property type="term" value="C:ribosome"/>
    <property type="evidence" value="ECO:0007669"/>
    <property type="project" value="UniProtKB-KW"/>
</dbReference>
<dbReference type="GO" id="GO:0019843">
    <property type="term" value="F:rRNA binding"/>
    <property type="evidence" value="ECO:0007669"/>
    <property type="project" value="UniProtKB-KW"/>
</dbReference>
<dbReference type="GO" id="GO:0003735">
    <property type="term" value="F:structural constituent of ribosome"/>
    <property type="evidence" value="ECO:0007669"/>
    <property type="project" value="InterPro"/>
</dbReference>
<dbReference type="GO" id="GO:0006412">
    <property type="term" value="P:translation"/>
    <property type="evidence" value="ECO:0007669"/>
    <property type="project" value="InterPro"/>
</dbReference>
<dbReference type="FunFam" id="3.30.1490.10:FF:000001">
    <property type="entry name" value="30S ribosomal protein S8"/>
    <property type="match status" value="1"/>
</dbReference>
<dbReference type="Gene3D" id="3.30.1370.30">
    <property type="match status" value="1"/>
</dbReference>
<dbReference type="Gene3D" id="3.30.1490.10">
    <property type="match status" value="1"/>
</dbReference>
<dbReference type="HAMAP" id="MF_01302_B">
    <property type="entry name" value="Ribosomal_uS8_B"/>
    <property type="match status" value="1"/>
</dbReference>
<dbReference type="InterPro" id="IPR000630">
    <property type="entry name" value="Ribosomal_uS8"/>
</dbReference>
<dbReference type="InterPro" id="IPR047863">
    <property type="entry name" value="Ribosomal_uS8_CS"/>
</dbReference>
<dbReference type="InterPro" id="IPR035987">
    <property type="entry name" value="Ribosomal_uS8_sf"/>
</dbReference>
<dbReference type="NCBIfam" id="NF001109">
    <property type="entry name" value="PRK00136.1"/>
    <property type="match status" value="1"/>
</dbReference>
<dbReference type="PANTHER" id="PTHR11758">
    <property type="entry name" value="40S RIBOSOMAL PROTEIN S15A"/>
    <property type="match status" value="1"/>
</dbReference>
<dbReference type="Pfam" id="PF00410">
    <property type="entry name" value="Ribosomal_S8"/>
    <property type="match status" value="1"/>
</dbReference>
<dbReference type="SUPFAM" id="SSF56047">
    <property type="entry name" value="Ribosomal protein S8"/>
    <property type="match status" value="1"/>
</dbReference>
<dbReference type="PROSITE" id="PS00053">
    <property type="entry name" value="RIBOSOMAL_S8"/>
    <property type="match status" value="1"/>
</dbReference>
<feature type="chain" id="PRO_0000126562" description="Small ribosomal subunit protein uS8c">
    <location>
        <begin position="1"/>
        <end position="142"/>
    </location>
</feature>
<reference key="1">
    <citation type="journal article" date="1990" name="Curr. Genet.">
        <title>Genes for ribosomal proteins are retained on the 73 kb DNA from Astasia longa that resembles Euglena chloroplast DNA.</title>
        <authorList>
            <person name="Siemeister G."/>
            <person name="Buchholz C."/>
            <person name="Hachtel W."/>
        </authorList>
    </citation>
    <scope>NUCLEOTIDE SEQUENCE [GENOMIC DNA]</scope>
    <source>
        <strain>CCAP 1204-17a</strain>
    </source>
</reference>
<reference key="2">
    <citation type="journal article" date="1994" name="Plant Physiol.">
        <title>Plastid ribosomal protein genes from the nonphotosynthetic flagellate Astasia longa.</title>
        <authorList>
            <person name="Gockel G."/>
            <person name="Baier S."/>
            <person name="Hachtel W."/>
        </authorList>
    </citation>
    <scope>NUCLEOTIDE SEQUENCE [GENOMIC DNA]</scope>
    <source>
        <strain>CCAP 1204-17a</strain>
    </source>
</reference>
<reference key="3">
    <citation type="journal article" date="2000" name="Protist">
        <title>Complete gene map of the plastid genome of the nonphotosynthetic euglenoid flagellate Astasia longa.</title>
        <authorList>
            <person name="Gockel G."/>
            <person name="Hachtel W."/>
        </authorList>
    </citation>
    <scope>NUCLEOTIDE SEQUENCE [LARGE SCALE GENOMIC DNA]</scope>
    <source>
        <strain>CCAP 1204-17a</strain>
    </source>
</reference>